<accession>Q82ZA5</accession>
<comment type="function">
    <text evidence="1">Involved in the biosynthesis of the central metabolite phospho-alpha-D-ribosyl-1-pyrophosphate (PRPP) via the transfer of pyrophosphoryl group from ATP to 1-hydroxyl of ribose-5-phosphate (Rib-5-P).</text>
</comment>
<comment type="catalytic activity">
    <reaction evidence="1">
        <text>D-ribose 5-phosphate + ATP = 5-phospho-alpha-D-ribose 1-diphosphate + AMP + H(+)</text>
        <dbReference type="Rhea" id="RHEA:15609"/>
        <dbReference type="ChEBI" id="CHEBI:15378"/>
        <dbReference type="ChEBI" id="CHEBI:30616"/>
        <dbReference type="ChEBI" id="CHEBI:58017"/>
        <dbReference type="ChEBI" id="CHEBI:78346"/>
        <dbReference type="ChEBI" id="CHEBI:456215"/>
        <dbReference type="EC" id="2.7.6.1"/>
    </reaction>
</comment>
<comment type="cofactor">
    <cofactor evidence="1">
        <name>Mg(2+)</name>
        <dbReference type="ChEBI" id="CHEBI:18420"/>
    </cofactor>
    <text evidence="1">Binds 2 Mg(2+) ions per subunit.</text>
</comment>
<comment type="pathway">
    <text evidence="1">Metabolic intermediate biosynthesis; 5-phospho-alpha-D-ribose 1-diphosphate biosynthesis; 5-phospho-alpha-D-ribose 1-diphosphate from D-ribose 5-phosphate (route I): step 1/1.</text>
</comment>
<comment type="subunit">
    <text evidence="1">Homohexamer.</text>
</comment>
<comment type="subcellular location">
    <subcellularLocation>
        <location evidence="1">Cytoplasm</location>
    </subcellularLocation>
</comment>
<comment type="similarity">
    <text evidence="1">Belongs to the ribose-phosphate pyrophosphokinase family. Class I subfamily.</text>
</comment>
<organism>
    <name type="scientific">Enterococcus faecalis (strain ATCC 700802 / V583)</name>
    <dbReference type="NCBI Taxonomy" id="226185"/>
    <lineage>
        <taxon>Bacteria</taxon>
        <taxon>Bacillati</taxon>
        <taxon>Bacillota</taxon>
        <taxon>Bacilli</taxon>
        <taxon>Lactobacillales</taxon>
        <taxon>Enterococcaceae</taxon>
        <taxon>Enterococcus</taxon>
    </lineage>
</organism>
<protein>
    <recommendedName>
        <fullName evidence="1">Ribose-phosphate pyrophosphokinase 2</fullName>
        <shortName evidence="1">RPPK 2</shortName>
        <ecNumber evidence="1">2.7.6.1</ecNumber>
    </recommendedName>
    <alternativeName>
        <fullName evidence="1">5-phospho-D-ribosyl alpha-1-diphosphate synthase 2</fullName>
    </alternativeName>
    <alternativeName>
        <fullName evidence="1">Phosphoribosyl diphosphate synthase 2</fullName>
    </alternativeName>
    <alternativeName>
        <fullName evidence="1">Phosphoribosyl pyrophosphate synthase 2</fullName>
        <shortName evidence="1">P-Rib-PP synthase 2</shortName>
        <shortName evidence="1">PRPP synthase 2</shortName>
        <shortName evidence="1">PRPPase 2</shortName>
    </alternativeName>
</protein>
<keyword id="KW-0067">ATP-binding</keyword>
<keyword id="KW-0963">Cytoplasm</keyword>
<keyword id="KW-0418">Kinase</keyword>
<keyword id="KW-0460">Magnesium</keyword>
<keyword id="KW-0479">Metal-binding</keyword>
<keyword id="KW-0545">Nucleotide biosynthesis</keyword>
<keyword id="KW-0547">Nucleotide-binding</keyword>
<keyword id="KW-1185">Reference proteome</keyword>
<keyword id="KW-0808">Transferase</keyword>
<evidence type="ECO:0000255" key="1">
    <source>
        <dbReference type="HAMAP-Rule" id="MF_00583"/>
    </source>
</evidence>
<feature type="chain" id="PRO_0000141137" description="Ribose-phosphate pyrophosphokinase 2">
    <location>
        <begin position="1"/>
        <end position="323"/>
    </location>
</feature>
<feature type="active site" evidence="1">
    <location>
        <position position="200"/>
    </location>
</feature>
<feature type="binding site" evidence="1">
    <location>
        <begin position="43"/>
        <end position="45"/>
    </location>
    <ligand>
        <name>ATP</name>
        <dbReference type="ChEBI" id="CHEBI:30616"/>
    </ligand>
</feature>
<feature type="binding site" evidence="1">
    <location>
        <begin position="102"/>
        <end position="103"/>
    </location>
    <ligand>
        <name>ATP</name>
        <dbReference type="ChEBI" id="CHEBI:30616"/>
    </ligand>
</feature>
<feature type="binding site" evidence="1">
    <location>
        <position position="136"/>
    </location>
    <ligand>
        <name>Mg(2+)</name>
        <dbReference type="ChEBI" id="CHEBI:18420"/>
        <label>1</label>
    </ligand>
</feature>
<feature type="binding site" evidence="1">
    <location>
        <position position="177"/>
    </location>
    <ligand>
        <name>Mg(2+)</name>
        <dbReference type="ChEBI" id="CHEBI:18420"/>
        <label>2</label>
    </ligand>
</feature>
<feature type="binding site" evidence="1">
    <location>
        <position position="202"/>
    </location>
    <ligand>
        <name>D-ribose 5-phosphate</name>
        <dbReference type="ChEBI" id="CHEBI:78346"/>
    </ligand>
</feature>
<feature type="binding site" evidence="1">
    <location>
        <position position="226"/>
    </location>
    <ligand>
        <name>D-ribose 5-phosphate</name>
        <dbReference type="ChEBI" id="CHEBI:78346"/>
    </ligand>
</feature>
<feature type="binding site" evidence="1">
    <location>
        <begin position="230"/>
        <end position="234"/>
    </location>
    <ligand>
        <name>D-ribose 5-phosphate</name>
        <dbReference type="ChEBI" id="CHEBI:78346"/>
    </ligand>
</feature>
<proteinExistence type="inferred from homology"/>
<name>KPRS2_ENTFA</name>
<reference key="1">
    <citation type="journal article" date="2003" name="Science">
        <title>Role of mobile DNA in the evolution of vancomycin-resistant Enterococcus faecalis.</title>
        <authorList>
            <person name="Paulsen I.T."/>
            <person name="Banerjei L."/>
            <person name="Myers G.S.A."/>
            <person name="Nelson K.E."/>
            <person name="Seshadri R."/>
            <person name="Read T.D."/>
            <person name="Fouts D.E."/>
            <person name="Eisen J.A."/>
            <person name="Gill S.R."/>
            <person name="Heidelberg J.F."/>
            <person name="Tettelin H."/>
            <person name="Dodson R.J."/>
            <person name="Umayam L.A."/>
            <person name="Brinkac L.M."/>
            <person name="Beanan M.J."/>
            <person name="Daugherty S.C."/>
            <person name="DeBoy R.T."/>
            <person name="Durkin S.A."/>
            <person name="Kolonay J.F."/>
            <person name="Madupu R."/>
            <person name="Nelson W.C."/>
            <person name="Vamathevan J.J."/>
            <person name="Tran B."/>
            <person name="Upton J."/>
            <person name="Hansen T."/>
            <person name="Shetty J."/>
            <person name="Khouri H.M."/>
            <person name="Utterback T.R."/>
            <person name="Radune D."/>
            <person name="Ketchum K.A."/>
            <person name="Dougherty B.A."/>
            <person name="Fraser C.M."/>
        </authorList>
    </citation>
    <scope>NUCLEOTIDE SEQUENCE [LARGE SCALE GENOMIC DNA]</scope>
    <source>
        <strain>ATCC 700802 / V583</strain>
    </source>
</reference>
<gene>
    <name evidence="1" type="primary">prs2</name>
    <name type="synonym">prs1</name>
    <name type="synonym">prsA-2</name>
    <name type="ordered locus">EF_3163</name>
</gene>
<dbReference type="EC" id="2.7.6.1" evidence="1"/>
<dbReference type="EMBL" id="AE016830">
    <property type="protein sequence ID" value="AAO82837.1"/>
    <property type="molecule type" value="Genomic_DNA"/>
</dbReference>
<dbReference type="RefSeq" id="NP_816767.1">
    <property type="nucleotide sequence ID" value="NC_004668.1"/>
</dbReference>
<dbReference type="RefSeq" id="WP_002387396.1">
    <property type="nucleotide sequence ID" value="NZ_KE136524.1"/>
</dbReference>
<dbReference type="SMR" id="Q82ZA5"/>
<dbReference type="STRING" id="226185.EF_3163"/>
<dbReference type="EnsemblBacteria" id="AAO82837">
    <property type="protein sequence ID" value="AAO82837"/>
    <property type="gene ID" value="EF_3163"/>
</dbReference>
<dbReference type="KEGG" id="efa:EF3163"/>
<dbReference type="PATRIC" id="fig|226185.45.peg.415"/>
<dbReference type="eggNOG" id="COG0462">
    <property type="taxonomic scope" value="Bacteria"/>
</dbReference>
<dbReference type="HOGENOM" id="CLU_033546_2_0_9"/>
<dbReference type="UniPathway" id="UPA00087">
    <property type="reaction ID" value="UER00172"/>
</dbReference>
<dbReference type="Proteomes" id="UP000001415">
    <property type="component" value="Chromosome"/>
</dbReference>
<dbReference type="GO" id="GO:0005737">
    <property type="term" value="C:cytoplasm"/>
    <property type="evidence" value="ECO:0007669"/>
    <property type="project" value="UniProtKB-SubCell"/>
</dbReference>
<dbReference type="GO" id="GO:0002189">
    <property type="term" value="C:ribose phosphate diphosphokinase complex"/>
    <property type="evidence" value="ECO:0007669"/>
    <property type="project" value="TreeGrafter"/>
</dbReference>
<dbReference type="GO" id="GO:0005524">
    <property type="term" value="F:ATP binding"/>
    <property type="evidence" value="ECO:0007669"/>
    <property type="project" value="UniProtKB-KW"/>
</dbReference>
<dbReference type="GO" id="GO:0016301">
    <property type="term" value="F:kinase activity"/>
    <property type="evidence" value="ECO:0007669"/>
    <property type="project" value="UniProtKB-KW"/>
</dbReference>
<dbReference type="GO" id="GO:0000287">
    <property type="term" value="F:magnesium ion binding"/>
    <property type="evidence" value="ECO:0007669"/>
    <property type="project" value="UniProtKB-UniRule"/>
</dbReference>
<dbReference type="GO" id="GO:0004749">
    <property type="term" value="F:ribose phosphate diphosphokinase activity"/>
    <property type="evidence" value="ECO:0007669"/>
    <property type="project" value="UniProtKB-UniRule"/>
</dbReference>
<dbReference type="GO" id="GO:0006015">
    <property type="term" value="P:5-phosphoribose 1-diphosphate biosynthetic process"/>
    <property type="evidence" value="ECO:0007669"/>
    <property type="project" value="UniProtKB-UniRule"/>
</dbReference>
<dbReference type="GO" id="GO:0006164">
    <property type="term" value="P:purine nucleotide biosynthetic process"/>
    <property type="evidence" value="ECO:0007669"/>
    <property type="project" value="TreeGrafter"/>
</dbReference>
<dbReference type="GO" id="GO:0009156">
    <property type="term" value="P:ribonucleoside monophosphate biosynthetic process"/>
    <property type="evidence" value="ECO:0007669"/>
    <property type="project" value="InterPro"/>
</dbReference>
<dbReference type="CDD" id="cd06223">
    <property type="entry name" value="PRTases_typeI"/>
    <property type="match status" value="1"/>
</dbReference>
<dbReference type="FunFam" id="3.40.50.2020:FF:000001">
    <property type="entry name" value="Ribose-phosphate pyrophosphokinase"/>
    <property type="match status" value="1"/>
</dbReference>
<dbReference type="Gene3D" id="3.40.50.2020">
    <property type="match status" value="2"/>
</dbReference>
<dbReference type="HAMAP" id="MF_00583_B">
    <property type="entry name" value="RibP_PPkinase_B"/>
    <property type="match status" value="1"/>
</dbReference>
<dbReference type="InterPro" id="IPR000842">
    <property type="entry name" value="PRib_PP_synth_CS"/>
</dbReference>
<dbReference type="InterPro" id="IPR029099">
    <property type="entry name" value="Pribosyltran_N"/>
</dbReference>
<dbReference type="InterPro" id="IPR000836">
    <property type="entry name" value="PRibTrfase_dom"/>
</dbReference>
<dbReference type="InterPro" id="IPR029057">
    <property type="entry name" value="PRTase-like"/>
</dbReference>
<dbReference type="InterPro" id="IPR005946">
    <property type="entry name" value="Rib-P_diPkinase"/>
</dbReference>
<dbReference type="InterPro" id="IPR037515">
    <property type="entry name" value="Rib-P_diPkinase_bac"/>
</dbReference>
<dbReference type="NCBIfam" id="NF002320">
    <property type="entry name" value="PRK01259.1"/>
    <property type="match status" value="1"/>
</dbReference>
<dbReference type="NCBIfam" id="NF002618">
    <property type="entry name" value="PRK02269.1"/>
    <property type="match status" value="1"/>
</dbReference>
<dbReference type="NCBIfam" id="TIGR01251">
    <property type="entry name" value="ribP_PPkin"/>
    <property type="match status" value="1"/>
</dbReference>
<dbReference type="PANTHER" id="PTHR10210">
    <property type="entry name" value="RIBOSE-PHOSPHATE DIPHOSPHOKINASE FAMILY MEMBER"/>
    <property type="match status" value="1"/>
</dbReference>
<dbReference type="PANTHER" id="PTHR10210:SF41">
    <property type="entry name" value="RIBOSE-PHOSPHATE PYROPHOSPHOKINASE 1, CHLOROPLASTIC"/>
    <property type="match status" value="1"/>
</dbReference>
<dbReference type="Pfam" id="PF14572">
    <property type="entry name" value="Pribosyl_synth"/>
    <property type="match status" value="1"/>
</dbReference>
<dbReference type="Pfam" id="PF13793">
    <property type="entry name" value="Pribosyltran_N"/>
    <property type="match status" value="1"/>
</dbReference>
<dbReference type="SMART" id="SM01400">
    <property type="entry name" value="Pribosyltran_N"/>
    <property type="match status" value="1"/>
</dbReference>
<dbReference type="SUPFAM" id="SSF53271">
    <property type="entry name" value="PRTase-like"/>
    <property type="match status" value="1"/>
</dbReference>
<dbReference type="PROSITE" id="PS00114">
    <property type="entry name" value="PRPP_SYNTHASE"/>
    <property type="match status" value="1"/>
</dbReference>
<sequence length="323" mass="35393">MSKHYFDPRLKIFSLNSNRPLAEKIADAVGVELGKCSVTQFSDGEIQVNIEESIRGAHVYVIQSTSSPVNDNLMELLIMIDALKRASAKTINVVMPYYGYARQDRKARAREPITAKLVANMIEKAGATRMLTLDLHAVQIQGFFDIPVDHLMGAPLIADYFIEHGIQGDDVVVVSPDHGGVTRARKLAEFLKAPIAIIDKRRPKANVAEVMNIIGHVEGKTCVLIDDMIDTAGTISLAANALKEAGAKDVYASCTHPVLSGPALQRIEDSAIERLVVTDSIYLSDDRKIVKIDEVSVGELIGDAIKRIHENKPVSPLFETKNK</sequence>